<sequence>MPLSYQHFRKLLLLDDETEAGPLEEELPRLADEDLNRRVAEDLNLGNLNVSIPWTHKVGNFTGLYSSTVPIFNPEWQTPSFPKIHLHEDIINRCQQFVGPLTVNEKRRLKLIMPARFYPNSTKYLPLDKGIKPYYPDQVVNHYFQTRHYLHTLWKAGILYKRETTRSASFCGSPYSWEQELQHSQRHGDESFCSQPSGILSRSSVGPCIRSQFNKSRLGLQPHQGPLATSQPGRSGSIRPRALPSTRRCFGVEPSGSGHIDYSANSSSHCLHQSAVRKAAYSHLSTSKRQSSSGHAVEFHSFAPSSARSQSQGPVFSCWWLQFRNTQPCSQYCLSHLVNLLEDWGPCVEHGEHHIRIPRTPARVTGGVFLVDKNPHNTAESRLVVDFSQFSRGLTRVSWPKFAVPNLQSLTNLLSSNLSWLSLDVSAAFYHIPLHPAAMPHLLIGSSGLSRYVARLSSNSRIHNNQYGTLQNLHDSCSRQLYVSLMLLYKTYGWKLHLYSHPIILGFRKIPMGVGLSPFLLAQFTSAICSVVRRAFPHCLAFSYMDDVVLGAKSVQHRESLYTAVTNFLLSLGIHLNPNKTKRWGYSLNFMGYVIGSWGTLPQDHIIQKIKHCFRKLPVNRPIDWKVCQRIVGLLGFAAPFTQCGYPALMPLYACIQAKQAFTFSPTYKAFLNQQYLNLYPVARQRSGLCQVFADATPTGWGLAIGHQRMRGTFVAPLPIHTAELLAACFARSRSGAKLIGTDNSVVLSRKYTSFPWLLGCTANWILRGTSFVYVPSALNPADDPSRGRLGLYRPLLRLPYRPTTGRTSLYAVSPSVPSHLPVRVHFASPLHVAWRPP</sequence>
<dbReference type="EC" id="2.7.7.7" evidence="1"/>
<dbReference type="EC" id="2.7.7.49" evidence="1"/>
<dbReference type="EC" id="3.1.26.4" evidence="1"/>
<dbReference type="EMBL" id="AF297625">
    <property type="protein sequence ID" value="AAK97203.1"/>
    <property type="molecule type" value="Genomic_DNA"/>
</dbReference>
<dbReference type="Proteomes" id="UP000007909">
    <property type="component" value="Genome"/>
</dbReference>
<dbReference type="GO" id="GO:0003677">
    <property type="term" value="F:DNA binding"/>
    <property type="evidence" value="ECO:0007669"/>
    <property type="project" value="UniProtKB-UniRule"/>
</dbReference>
<dbReference type="GO" id="GO:0003887">
    <property type="term" value="F:DNA-directed DNA polymerase activity"/>
    <property type="evidence" value="ECO:0007669"/>
    <property type="project" value="UniProtKB-UniRule"/>
</dbReference>
<dbReference type="GO" id="GO:0046872">
    <property type="term" value="F:metal ion binding"/>
    <property type="evidence" value="ECO:0007669"/>
    <property type="project" value="UniProtKB-UniRule"/>
</dbReference>
<dbReference type="GO" id="GO:0003964">
    <property type="term" value="F:RNA-directed DNA polymerase activity"/>
    <property type="evidence" value="ECO:0007669"/>
    <property type="project" value="UniProtKB-UniRule"/>
</dbReference>
<dbReference type="GO" id="GO:0004523">
    <property type="term" value="F:RNA-DNA hybrid ribonuclease activity"/>
    <property type="evidence" value="ECO:0007669"/>
    <property type="project" value="UniProtKB-UniRule"/>
</dbReference>
<dbReference type="GO" id="GO:0006260">
    <property type="term" value="P:DNA replication"/>
    <property type="evidence" value="ECO:0007669"/>
    <property type="project" value="UniProtKB-UniRule"/>
</dbReference>
<dbReference type="GO" id="GO:0052170">
    <property type="term" value="P:symbiont-mediated suppression of host innate immune response"/>
    <property type="evidence" value="ECO:0007669"/>
    <property type="project" value="UniProtKB-UniRule"/>
</dbReference>
<dbReference type="FunFam" id="3.30.70.270:FF:000009">
    <property type="entry name" value="Protein P"/>
    <property type="match status" value="1"/>
</dbReference>
<dbReference type="Gene3D" id="3.30.70.270">
    <property type="match status" value="1"/>
</dbReference>
<dbReference type="HAMAP" id="MF_04073">
    <property type="entry name" value="HBV_DPOL"/>
    <property type="match status" value="1"/>
</dbReference>
<dbReference type="InterPro" id="IPR043502">
    <property type="entry name" value="DNA/RNA_pol_sf"/>
</dbReference>
<dbReference type="InterPro" id="IPR001462">
    <property type="entry name" value="DNApol_viral_C"/>
</dbReference>
<dbReference type="InterPro" id="IPR000201">
    <property type="entry name" value="DNApol_viral_N"/>
</dbReference>
<dbReference type="InterPro" id="IPR037531">
    <property type="entry name" value="HBV_DPOL"/>
</dbReference>
<dbReference type="InterPro" id="IPR043128">
    <property type="entry name" value="Rev_trsase/Diguanyl_cyclase"/>
</dbReference>
<dbReference type="InterPro" id="IPR000477">
    <property type="entry name" value="RT_dom"/>
</dbReference>
<dbReference type="InterPro" id="IPR051320">
    <property type="entry name" value="Viral_Replic_Matur_Polypro"/>
</dbReference>
<dbReference type="PANTHER" id="PTHR33064:SF29">
    <property type="entry name" value="PEPTIDASE A2 DOMAIN-CONTAINING PROTEIN-RELATED"/>
    <property type="match status" value="1"/>
</dbReference>
<dbReference type="PANTHER" id="PTHR33064">
    <property type="entry name" value="POL PROTEIN"/>
    <property type="match status" value="1"/>
</dbReference>
<dbReference type="Pfam" id="PF00336">
    <property type="entry name" value="DNA_pol_viral_C"/>
    <property type="match status" value="1"/>
</dbReference>
<dbReference type="Pfam" id="PF00242">
    <property type="entry name" value="DNA_pol_viral_N"/>
    <property type="match status" value="1"/>
</dbReference>
<dbReference type="Pfam" id="PF00078">
    <property type="entry name" value="RVT_1"/>
    <property type="match status" value="1"/>
</dbReference>
<dbReference type="SUPFAM" id="SSF56672">
    <property type="entry name" value="DNA/RNA polymerases"/>
    <property type="match status" value="1"/>
</dbReference>
<dbReference type="PROSITE" id="PS50878">
    <property type="entry name" value="RT_POL"/>
    <property type="match status" value="1"/>
</dbReference>
<reference key="1">
    <citation type="journal article" date="2001" name="J. Med. Virol.">
        <title>Molecular analysis of hepatitis B virus genomes isolated from black African patients with fulminant hepatitis B.</title>
        <authorList>
            <person name="Owiredu W.K."/>
            <person name="Kramvis A."/>
            <person name="Kew M.C."/>
        </authorList>
    </citation>
    <scope>NUCLEOTIDE SEQUENCE [GENOMIC DNA]</scope>
</reference>
<reference key="2">
    <citation type="journal article" date="2007" name="World J. Gastroenterol.">
        <title>Hepatitis B virus replication.</title>
        <authorList>
            <person name="Beck J."/>
            <person name="Nassal M."/>
        </authorList>
    </citation>
    <scope>REVIEW</scope>
</reference>
<gene>
    <name evidence="1" type="primary">P</name>
</gene>
<accession>Q91C36</accession>
<organismHost>
    <name type="scientific">Homo sapiens</name>
    <name type="common">Human</name>
    <dbReference type="NCBI Taxonomy" id="9606"/>
</organismHost>
<organismHost>
    <name type="scientific">Pan troglodytes</name>
    <name type="common">Chimpanzee</name>
    <dbReference type="NCBI Taxonomy" id="9598"/>
</organismHost>
<name>DPOL_HBVA6</name>
<organism>
    <name type="scientific">Hepatitis B virus genotype A1 subtype adw2 (isolate South Africa/84/2001)</name>
    <name type="common">HBV-A</name>
    <dbReference type="NCBI Taxonomy" id="489454"/>
    <lineage>
        <taxon>Viruses</taxon>
        <taxon>Riboviria</taxon>
        <taxon>Pararnavirae</taxon>
        <taxon>Artverviricota</taxon>
        <taxon>Revtraviricetes</taxon>
        <taxon>Blubervirales</taxon>
        <taxon>Hepadnaviridae</taxon>
        <taxon>Orthohepadnavirus</taxon>
        <taxon>Hepatitis B virus</taxon>
    </lineage>
</organism>
<comment type="function">
    <text evidence="1">Multifunctional enzyme that converts the viral RNA genome into dsDNA in viral cytoplasmic capsids. This enzyme displays a DNA polymerase activity that can copy either DNA or RNA templates, and a ribonuclease H (RNase H) activity that cleaves the RNA strand of RNA-DNA heteroduplexes in a partially processive 3'- to 5'-endonucleasic mode. Neo-synthesized pregenomic RNA (pgRNA) are encapsidated together with the P protein, and reverse-transcribed inside the nucleocapsid. Initiation of reverse-transcription occurs first by binding the epsilon loop on the pgRNA genome, and is initiated by protein priming, thereby the 5'-end of (-)DNA is covalently linked to P protein. Partial (+)DNA is synthesized from the (-)DNA template and generates the relaxed circular DNA (RC-DNA) genome. After budding and infection, the RC-DNA migrates in the nucleus, and is converted into a plasmid-like covalently closed circular DNA (cccDNA). The activity of P protein does not seem to be necessary for cccDNA generation, and is presumably released from (+)DNA by host nuclear DNA repair machinery.</text>
</comment>
<comment type="catalytic activity">
    <reaction evidence="1">
        <text>DNA(n) + a 2'-deoxyribonucleoside 5'-triphosphate = DNA(n+1) + diphosphate</text>
        <dbReference type="Rhea" id="RHEA:22508"/>
        <dbReference type="Rhea" id="RHEA-COMP:17339"/>
        <dbReference type="Rhea" id="RHEA-COMP:17340"/>
        <dbReference type="ChEBI" id="CHEBI:33019"/>
        <dbReference type="ChEBI" id="CHEBI:61560"/>
        <dbReference type="ChEBI" id="CHEBI:173112"/>
        <dbReference type="EC" id="2.7.7.7"/>
    </reaction>
</comment>
<comment type="catalytic activity">
    <reaction evidence="1">
        <text>DNA(n) + a 2'-deoxyribonucleoside 5'-triphosphate = DNA(n+1) + diphosphate</text>
        <dbReference type="Rhea" id="RHEA:22508"/>
        <dbReference type="Rhea" id="RHEA-COMP:17339"/>
        <dbReference type="Rhea" id="RHEA-COMP:17340"/>
        <dbReference type="ChEBI" id="CHEBI:33019"/>
        <dbReference type="ChEBI" id="CHEBI:61560"/>
        <dbReference type="ChEBI" id="CHEBI:173112"/>
        <dbReference type="EC" id="2.7.7.49"/>
    </reaction>
</comment>
<comment type="catalytic activity">
    <reaction evidence="1">
        <text>Endonucleolytic cleavage to 5'-phosphomonoester.</text>
        <dbReference type="EC" id="3.1.26.4"/>
    </reaction>
</comment>
<comment type="activity regulation">
    <text evidence="1">Activated by host HSP70 and HSP40 in vitro to be able to bind the epsilon loop of the pgRNA. Because deletion of the RNase H region renders the protein partly chaperone-independent, the chaperones may be needed indirectly to relieve occlusion of the RNA-binding site by this domain. Inhibited by several reverse-transcriptase inhibitors: Lamivudine, Adefovir and Entecavir.</text>
</comment>
<comment type="domain">
    <text evidence="1">Terminal protein domain (TP) is hepadnavirus-specific. Spacer domain is highly variable and separates the TP and RT domains. Polymerase/reverse-transcriptase domain (RT) and ribonuclease H domain (RH) are similar to retrovirus reverse transcriptase/RNase H.</text>
</comment>
<comment type="domain">
    <text evidence="1">The polymerase/reverse transcriptase (RT) and ribonuclease H (RH) domains are structured in five subdomains: finger, palm, thumb, connection and RNase H. Within the palm subdomain, the 'primer grip' region is thought to be involved in the positioning of the primer terminus for accommodating the incoming nucleotide. The RH domain stabilizes the association of RT with primer-template.</text>
</comment>
<comment type="miscellaneous">
    <text evidence="1">Hepadnaviral virions contain probably just one P protein molecule per particle.</text>
</comment>
<comment type="similarity">
    <text evidence="1">Belongs to the hepadnaviridae P protein family.</text>
</comment>
<evidence type="ECO:0000255" key="1">
    <source>
        <dbReference type="HAMAP-Rule" id="MF_04073"/>
    </source>
</evidence>
<evidence type="ECO:0000256" key="2">
    <source>
        <dbReference type="SAM" id="MobiDB-lite"/>
    </source>
</evidence>
<protein>
    <recommendedName>
        <fullName evidence="1">Protein P</fullName>
    </recommendedName>
    <domain>
        <recommendedName>
            <fullName evidence="1">DNA-directed DNA polymerase</fullName>
            <ecNumber evidence="1">2.7.7.7</ecNumber>
        </recommendedName>
    </domain>
    <domain>
        <recommendedName>
            <fullName evidence="1">RNA-directed DNA polymerase</fullName>
            <ecNumber evidence="1">2.7.7.49</ecNumber>
        </recommendedName>
    </domain>
    <domain>
        <recommendedName>
            <fullName evidence="1">Ribonuclease H</fullName>
            <ecNumber evidence="1">3.1.26.4</ecNumber>
        </recommendedName>
    </domain>
</protein>
<keyword id="KW-0235">DNA replication</keyword>
<keyword id="KW-0238">DNA-binding</keyword>
<keyword id="KW-0239">DNA-directed DNA polymerase</keyword>
<keyword id="KW-0255">Endonuclease</keyword>
<keyword id="KW-0945">Host-virus interaction</keyword>
<keyword id="KW-0378">Hydrolase</keyword>
<keyword id="KW-1090">Inhibition of host innate immune response by virus</keyword>
<keyword id="KW-1113">Inhibition of host RLR pathway by virus</keyword>
<keyword id="KW-0460">Magnesium</keyword>
<keyword id="KW-0479">Metal-binding</keyword>
<keyword id="KW-0511">Multifunctional enzyme</keyword>
<keyword id="KW-0540">Nuclease</keyword>
<keyword id="KW-0548">Nucleotidyltransferase</keyword>
<keyword id="KW-0695">RNA-directed DNA polymerase</keyword>
<keyword id="KW-0808">Transferase</keyword>
<keyword id="KW-0899">Viral immunoevasion</keyword>
<proteinExistence type="inferred from homology"/>
<feature type="chain" id="PRO_0000323251" description="Protein P">
    <location>
        <begin position="1"/>
        <end position="838"/>
    </location>
</feature>
<feature type="domain" description="Reverse transcriptase" evidence="1">
    <location>
        <begin position="352"/>
        <end position="595"/>
    </location>
</feature>
<feature type="region of interest" description="Terminal protein domain (TP)" evidence="1">
    <location>
        <begin position="1"/>
        <end position="179"/>
    </location>
</feature>
<feature type="region of interest" description="Spacer" evidence="1">
    <location>
        <begin position="180"/>
        <end position="341"/>
    </location>
</feature>
<feature type="region of interest" description="Disordered" evidence="2">
    <location>
        <begin position="218"/>
        <end position="242"/>
    </location>
</feature>
<feature type="region of interest" description="Polymerase/reverse transcriptase domain (RT)" evidence="1">
    <location>
        <begin position="342"/>
        <end position="685"/>
    </location>
</feature>
<feature type="binding site" evidence="1">
    <location>
        <position position="424"/>
    </location>
    <ligand>
        <name>Mg(2+)</name>
        <dbReference type="ChEBI" id="CHEBI:18420"/>
        <note>catalytic</note>
    </ligand>
</feature>
<feature type="binding site" evidence="1">
    <location>
        <position position="546"/>
    </location>
    <ligand>
        <name>Mg(2+)</name>
        <dbReference type="ChEBI" id="CHEBI:18420"/>
        <note>catalytic</note>
    </ligand>
</feature>
<feature type="binding site" evidence="1">
    <location>
        <position position="547"/>
    </location>
    <ligand>
        <name>Mg(2+)</name>
        <dbReference type="ChEBI" id="CHEBI:18420"/>
        <note>catalytic</note>
    </ligand>
</feature>
<feature type="site" description="Priming of reverse-transcription by covalently linking the first nucleotide of the (-)DNA" evidence="1">
    <location>
        <position position="65"/>
    </location>
</feature>